<dbReference type="EMBL" id="AF144355">
    <property type="protein sequence ID" value="AAG43324.1"/>
    <property type="molecule type" value="Genomic_DNA"/>
</dbReference>
<dbReference type="GO" id="GO:0009507">
    <property type="term" value="C:chloroplast"/>
    <property type="evidence" value="ECO:0007669"/>
    <property type="project" value="UniProtKB-SubCell"/>
</dbReference>
<dbReference type="GO" id="GO:0003723">
    <property type="term" value="F:RNA binding"/>
    <property type="evidence" value="ECO:0007669"/>
    <property type="project" value="UniProtKB-KW"/>
</dbReference>
<dbReference type="GO" id="GO:0006397">
    <property type="term" value="P:mRNA processing"/>
    <property type="evidence" value="ECO:0007669"/>
    <property type="project" value="UniProtKB-KW"/>
</dbReference>
<dbReference type="GO" id="GO:0008380">
    <property type="term" value="P:RNA splicing"/>
    <property type="evidence" value="ECO:0007669"/>
    <property type="project" value="UniProtKB-UniRule"/>
</dbReference>
<dbReference type="GO" id="GO:0008033">
    <property type="term" value="P:tRNA processing"/>
    <property type="evidence" value="ECO:0007669"/>
    <property type="project" value="UniProtKB-KW"/>
</dbReference>
<dbReference type="HAMAP" id="MF_01390">
    <property type="entry name" value="MatK"/>
    <property type="match status" value="1"/>
</dbReference>
<dbReference type="InterPro" id="IPR024937">
    <property type="entry name" value="Domain_X"/>
</dbReference>
<dbReference type="InterPro" id="IPR002866">
    <property type="entry name" value="Maturase_MatK"/>
</dbReference>
<dbReference type="InterPro" id="IPR024942">
    <property type="entry name" value="Maturase_MatK_N"/>
</dbReference>
<dbReference type="PANTHER" id="PTHR34811">
    <property type="entry name" value="MATURASE K"/>
    <property type="match status" value="1"/>
</dbReference>
<dbReference type="PANTHER" id="PTHR34811:SF1">
    <property type="entry name" value="MATURASE K"/>
    <property type="match status" value="1"/>
</dbReference>
<dbReference type="Pfam" id="PF01348">
    <property type="entry name" value="Intron_maturas2"/>
    <property type="match status" value="1"/>
</dbReference>
<dbReference type="Pfam" id="PF01824">
    <property type="entry name" value="MatK_N"/>
    <property type="match status" value="1"/>
</dbReference>
<protein>
    <recommendedName>
        <fullName evidence="1">Maturase K</fullName>
    </recommendedName>
    <alternativeName>
        <fullName evidence="1">Intron maturase</fullName>
    </alternativeName>
</protein>
<organism>
    <name type="scientific">Rorippa palustris</name>
    <name type="common">Bog yellow-cress</name>
    <name type="synonym">Rorippa islandica</name>
    <dbReference type="NCBI Taxonomy" id="50498"/>
    <lineage>
        <taxon>Eukaryota</taxon>
        <taxon>Viridiplantae</taxon>
        <taxon>Streptophyta</taxon>
        <taxon>Embryophyta</taxon>
        <taxon>Tracheophyta</taxon>
        <taxon>Spermatophyta</taxon>
        <taxon>Magnoliopsida</taxon>
        <taxon>eudicotyledons</taxon>
        <taxon>Gunneridae</taxon>
        <taxon>Pentapetalae</taxon>
        <taxon>rosids</taxon>
        <taxon>malvids</taxon>
        <taxon>Brassicales</taxon>
        <taxon>Brassicaceae</taxon>
        <taxon>Cardamineae</taxon>
        <taxon>Rorippa</taxon>
    </lineage>
</organism>
<evidence type="ECO:0000255" key="1">
    <source>
        <dbReference type="HAMAP-Rule" id="MF_01390"/>
    </source>
</evidence>
<sequence>MXXXXGYLEFDGARQQSFLYPLFFREYIYVLAYDHGLNRLNRNRSIFFENVDYEKKYSSLIVKRLILRMYEQNRLIIPSKDLNQNHFFGHTSLFYYQMISVLFAVIVEIPFSLRLGSSFEGKQFKKSYNLQSIHSIFPFLEDKLSHFNYVLDVVIPYPIHLEILVQTLRYRVKDASSLHFFRFCLYEYCNWKDFSIKKKSILNPRFFLFLYNSHVCEYESIFFFLRKRSSHLRSTSYEVLFERILFYGKIQHFLKVFINSFPAILGLLKDPFIHYVRYHGRCILATKDTPLLMNKWKYYFVNLCQCYFSVWFQSQKVNINQLSKDNLEFLGYLSSLRLNPLVVRSQMLENSFLIDNVRIKLDSKIPISSIIGSLAKDKFCNVLGHPISKAVWTDSSDSDILNRFVRISRNISHYYSGSSNKKNLYRIKYILRLCCVKTLARKHKSTVRAFLKRLGSGLLEEFLTGEDQVLSLIFPRSYYASKRLYRVRIWYLDILYLNDLVNHE</sequence>
<reference key="1">
    <citation type="journal article" date="2001" name="Am. J. Bot.">
        <title>Molecular systematics of the Brassicaceae: evidence from coding plastidic matK and nuclear Chs sequences.</title>
        <authorList>
            <person name="Koch M."/>
            <person name="Haubold B."/>
            <person name="Mitchell-Olds T."/>
        </authorList>
    </citation>
    <scope>NUCLEOTIDE SEQUENCE [GENOMIC DNA]</scope>
</reference>
<feature type="chain" id="PRO_0000143683" description="Maturase K">
    <location>
        <begin position="1"/>
        <end position="504"/>
    </location>
</feature>
<geneLocation type="chloroplast"/>
<comment type="function">
    <text evidence="1">Usually encoded in the trnK tRNA gene intron. Probably assists in splicing its own and other chloroplast group II introns.</text>
</comment>
<comment type="subcellular location">
    <subcellularLocation>
        <location>Plastid</location>
        <location>Chloroplast</location>
    </subcellularLocation>
</comment>
<comment type="similarity">
    <text evidence="1">Belongs to the intron maturase 2 family. MatK subfamily.</text>
</comment>
<accession>Q7IZ70</accession>
<gene>
    <name evidence="1" type="primary">matK</name>
</gene>
<name>MATK_RORPA</name>
<proteinExistence type="inferred from homology"/>
<keyword id="KW-0150">Chloroplast</keyword>
<keyword id="KW-0507">mRNA processing</keyword>
<keyword id="KW-0934">Plastid</keyword>
<keyword id="KW-0694">RNA-binding</keyword>
<keyword id="KW-0819">tRNA processing</keyword>